<organism>
    <name type="scientific">Clostridium botulinum (strain ATCC 19397 / Type A)</name>
    <dbReference type="NCBI Taxonomy" id="441770"/>
    <lineage>
        <taxon>Bacteria</taxon>
        <taxon>Bacillati</taxon>
        <taxon>Bacillota</taxon>
        <taxon>Clostridia</taxon>
        <taxon>Eubacteriales</taxon>
        <taxon>Clostridiaceae</taxon>
        <taxon>Clostridium</taxon>
    </lineage>
</organism>
<name>RIMO_CLOB1</name>
<evidence type="ECO:0000255" key="1">
    <source>
        <dbReference type="HAMAP-Rule" id="MF_01865"/>
    </source>
</evidence>
<evidence type="ECO:0000255" key="2">
    <source>
        <dbReference type="PROSITE-ProRule" id="PRU01266"/>
    </source>
</evidence>
<comment type="function">
    <text evidence="1">Catalyzes the methylthiolation of an aspartic acid residue of ribosomal protein uS12.</text>
</comment>
<comment type="catalytic activity">
    <reaction evidence="1">
        <text>L-aspartate(89)-[ribosomal protein uS12]-hydrogen + (sulfur carrier)-SH + AH2 + 2 S-adenosyl-L-methionine = 3-methylsulfanyl-L-aspartate(89)-[ribosomal protein uS12]-hydrogen + (sulfur carrier)-H + 5'-deoxyadenosine + L-methionine + A + S-adenosyl-L-homocysteine + 2 H(+)</text>
        <dbReference type="Rhea" id="RHEA:37087"/>
        <dbReference type="Rhea" id="RHEA-COMP:10460"/>
        <dbReference type="Rhea" id="RHEA-COMP:10461"/>
        <dbReference type="Rhea" id="RHEA-COMP:14737"/>
        <dbReference type="Rhea" id="RHEA-COMP:14739"/>
        <dbReference type="ChEBI" id="CHEBI:13193"/>
        <dbReference type="ChEBI" id="CHEBI:15378"/>
        <dbReference type="ChEBI" id="CHEBI:17319"/>
        <dbReference type="ChEBI" id="CHEBI:17499"/>
        <dbReference type="ChEBI" id="CHEBI:29917"/>
        <dbReference type="ChEBI" id="CHEBI:29961"/>
        <dbReference type="ChEBI" id="CHEBI:57844"/>
        <dbReference type="ChEBI" id="CHEBI:57856"/>
        <dbReference type="ChEBI" id="CHEBI:59789"/>
        <dbReference type="ChEBI" id="CHEBI:64428"/>
        <dbReference type="ChEBI" id="CHEBI:73599"/>
        <dbReference type="EC" id="2.8.4.4"/>
    </reaction>
</comment>
<comment type="cofactor">
    <cofactor evidence="1">
        <name>[4Fe-4S] cluster</name>
        <dbReference type="ChEBI" id="CHEBI:49883"/>
    </cofactor>
    <text evidence="1">Binds 2 [4Fe-4S] clusters. One cluster is coordinated with 3 cysteines and an exchangeable S-adenosyl-L-methionine.</text>
</comment>
<comment type="subcellular location">
    <subcellularLocation>
        <location evidence="1">Cytoplasm</location>
    </subcellularLocation>
</comment>
<comment type="similarity">
    <text evidence="1">Belongs to the methylthiotransferase family. RimO subfamily.</text>
</comment>
<reference key="1">
    <citation type="journal article" date="2007" name="PLoS ONE">
        <title>Analysis of the neurotoxin complex genes in Clostridium botulinum A1-A4 and B1 strains: BoNT/A3, /Ba4 and /B1 clusters are located within plasmids.</title>
        <authorList>
            <person name="Smith T.J."/>
            <person name="Hill K.K."/>
            <person name="Foley B.T."/>
            <person name="Detter J.C."/>
            <person name="Munk A.C."/>
            <person name="Bruce D.C."/>
            <person name="Doggett N.A."/>
            <person name="Smith L.A."/>
            <person name="Marks J.D."/>
            <person name="Xie G."/>
            <person name="Brettin T.S."/>
        </authorList>
    </citation>
    <scope>NUCLEOTIDE SEQUENCE [LARGE SCALE GENOMIC DNA]</scope>
    <source>
        <strain>ATCC 19397 / Type A</strain>
    </source>
</reference>
<keyword id="KW-0004">4Fe-4S</keyword>
<keyword id="KW-0963">Cytoplasm</keyword>
<keyword id="KW-0408">Iron</keyword>
<keyword id="KW-0411">Iron-sulfur</keyword>
<keyword id="KW-0479">Metal-binding</keyword>
<keyword id="KW-0949">S-adenosyl-L-methionine</keyword>
<keyword id="KW-0808">Transferase</keyword>
<sequence>MEKIKVALVSLGCDKNRIDSELMLYKLNEEAELVKDPKEAQVIIVNTCGFIETAKEESINTILQMASYKKTHNCKVLVVTGCLTQRYKGELKELIPEMDIMLGVNDYDKLLESIKVFLKSGEKSFYHKYSDTKINEGNRILTTPTYTAYVRIAEGCNNFCTYCAIPRIRGKYRSRKKENILKEVENLAKQGVKEIILIAQDTTMYGIDIYGKKVLHELLRDISKVEGVKWIRLLYCYPEEITKELIEEIKNNDKVCKYLDLPIQQISNSVLKRMGRKTTKETIINIIKKLRKEIEGITLRTSLIVGFPGETEGEFSELKEFVSDVKLDKLGVFKYSKEEGTSAALMEEQIDEEIKEKREEEIMILQQSISKDINKEKIGKTYEVIVEGTKEDMYYGRNYEMSPEIDGEIYFEKDENVKIGDIIKVKVTHSLEYDLIGVVYNELSK</sequence>
<dbReference type="EC" id="2.8.4.4" evidence="1"/>
<dbReference type="EMBL" id="CP000726">
    <property type="protein sequence ID" value="ABS33603.1"/>
    <property type="molecule type" value="Genomic_DNA"/>
</dbReference>
<dbReference type="RefSeq" id="WP_011986784.1">
    <property type="nucleotide sequence ID" value="NC_009697.1"/>
</dbReference>
<dbReference type="SMR" id="A7FVY1"/>
<dbReference type="GeneID" id="5186662"/>
<dbReference type="KEGG" id="cba:CLB_2270"/>
<dbReference type="HOGENOM" id="CLU_018697_0_1_9"/>
<dbReference type="GO" id="GO:0005829">
    <property type="term" value="C:cytosol"/>
    <property type="evidence" value="ECO:0007669"/>
    <property type="project" value="TreeGrafter"/>
</dbReference>
<dbReference type="GO" id="GO:0051539">
    <property type="term" value="F:4 iron, 4 sulfur cluster binding"/>
    <property type="evidence" value="ECO:0007669"/>
    <property type="project" value="UniProtKB-UniRule"/>
</dbReference>
<dbReference type="GO" id="GO:0035599">
    <property type="term" value="F:aspartic acid methylthiotransferase activity"/>
    <property type="evidence" value="ECO:0007669"/>
    <property type="project" value="TreeGrafter"/>
</dbReference>
<dbReference type="GO" id="GO:0046872">
    <property type="term" value="F:metal ion binding"/>
    <property type="evidence" value="ECO:0007669"/>
    <property type="project" value="UniProtKB-KW"/>
</dbReference>
<dbReference type="GO" id="GO:0103039">
    <property type="term" value="F:protein methylthiotransferase activity"/>
    <property type="evidence" value="ECO:0007669"/>
    <property type="project" value="UniProtKB-EC"/>
</dbReference>
<dbReference type="GO" id="GO:0006400">
    <property type="term" value="P:tRNA modification"/>
    <property type="evidence" value="ECO:0007669"/>
    <property type="project" value="InterPro"/>
</dbReference>
<dbReference type="CDD" id="cd01335">
    <property type="entry name" value="Radical_SAM"/>
    <property type="match status" value="1"/>
</dbReference>
<dbReference type="FunFam" id="2.40.50.140:FF:000210">
    <property type="entry name" value="Ribosomal protein S12 methylthiotransferase RimO"/>
    <property type="match status" value="1"/>
</dbReference>
<dbReference type="FunFam" id="3.40.50.12160:FF:000002">
    <property type="entry name" value="Ribosomal protein S12 methylthiotransferase RimO"/>
    <property type="match status" value="1"/>
</dbReference>
<dbReference type="FunFam" id="3.80.30.20:FF:000001">
    <property type="entry name" value="tRNA-2-methylthio-N(6)-dimethylallyladenosine synthase 2"/>
    <property type="match status" value="1"/>
</dbReference>
<dbReference type="Gene3D" id="3.40.50.12160">
    <property type="entry name" value="Methylthiotransferase, N-terminal domain"/>
    <property type="match status" value="1"/>
</dbReference>
<dbReference type="Gene3D" id="2.40.50.140">
    <property type="entry name" value="Nucleic acid-binding proteins"/>
    <property type="match status" value="1"/>
</dbReference>
<dbReference type="Gene3D" id="3.80.30.20">
    <property type="entry name" value="tm_1862 like domain"/>
    <property type="match status" value="1"/>
</dbReference>
<dbReference type="HAMAP" id="MF_01865">
    <property type="entry name" value="MTTase_RimO"/>
    <property type="match status" value="1"/>
</dbReference>
<dbReference type="InterPro" id="IPR006638">
    <property type="entry name" value="Elp3/MiaA/NifB-like_rSAM"/>
</dbReference>
<dbReference type="InterPro" id="IPR005839">
    <property type="entry name" value="Methylthiotransferase"/>
</dbReference>
<dbReference type="InterPro" id="IPR020612">
    <property type="entry name" value="Methylthiotransferase_CS"/>
</dbReference>
<dbReference type="InterPro" id="IPR013848">
    <property type="entry name" value="Methylthiotransferase_N"/>
</dbReference>
<dbReference type="InterPro" id="IPR038135">
    <property type="entry name" value="Methylthiotransferase_N_sf"/>
</dbReference>
<dbReference type="InterPro" id="IPR012340">
    <property type="entry name" value="NA-bd_OB-fold"/>
</dbReference>
<dbReference type="InterPro" id="IPR005840">
    <property type="entry name" value="Ribosomal_uS12_MeSTrfase_RimO"/>
</dbReference>
<dbReference type="InterPro" id="IPR007197">
    <property type="entry name" value="rSAM"/>
</dbReference>
<dbReference type="InterPro" id="IPR023404">
    <property type="entry name" value="rSAM_horseshoe"/>
</dbReference>
<dbReference type="InterPro" id="IPR002792">
    <property type="entry name" value="TRAM_dom"/>
</dbReference>
<dbReference type="NCBIfam" id="TIGR01125">
    <property type="entry name" value="30S ribosomal protein S12 methylthiotransferase RimO"/>
    <property type="match status" value="1"/>
</dbReference>
<dbReference type="NCBIfam" id="TIGR00089">
    <property type="entry name" value="MiaB/RimO family radical SAM methylthiotransferase"/>
    <property type="match status" value="1"/>
</dbReference>
<dbReference type="PANTHER" id="PTHR43837">
    <property type="entry name" value="RIBOSOMAL PROTEIN S12 METHYLTHIOTRANSFERASE RIMO"/>
    <property type="match status" value="1"/>
</dbReference>
<dbReference type="PANTHER" id="PTHR43837:SF1">
    <property type="entry name" value="RIBOSOMAL PROTEIN US12 METHYLTHIOTRANSFERASE RIMO"/>
    <property type="match status" value="1"/>
</dbReference>
<dbReference type="Pfam" id="PF04055">
    <property type="entry name" value="Radical_SAM"/>
    <property type="match status" value="1"/>
</dbReference>
<dbReference type="Pfam" id="PF18693">
    <property type="entry name" value="TRAM_2"/>
    <property type="match status" value="1"/>
</dbReference>
<dbReference type="Pfam" id="PF00919">
    <property type="entry name" value="UPF0004"/>
    <property type="match status" value="1"/>
</dbReference>
<dbReference type="SFLD" id="SFLDG01082">
    <property type="entry name" value="B12-binding_domain_containing"/>
    <property type="match status" value="1"/>
</dbReference>
<dbReference type="SFLD" id="SFLDG01061">
    <property type="entry name" value="methylthiotransferase"/>
    <property type="match status" value="1"/>
</dbReference>
<dbReference type="SFLD" id="SFLDF00274">
    <property type="entry name" value="ribosomal_protein_S12_methylth"/>
    <property type="match status" value="1"/>
</dbReference>
<dbReference type="SMART" id="SM00729">
    <property type="entry name" value="Elp3"/>
    <property type="match status" value="1"/>
</dbReference>
<dbReference type="SUPFAM" id="SSF102114">
    <property type="entry name" value="Radical SAM enzymes"/>
    <property type="match status" value="1"/>
</dbReference>
<dbReference type="PROSITE" id="PS51449">
    <property type="entry name" value="MTTASE_N"/>
    <property type="match status" value="1"/>
</dbReference>
<dbReference type="PROSITE" id="PS01278">
    <property type="entry name" value="MTTASE_RADICAL"/>
    <property type="match status" value="1"/>
</dbReference>
<dbReference type="PROSITE" id="PS51918">
    <property type="entry name" value="RADICAL_SAM"/>
    <property type="match status" value="1"/>
</dbReference>
<dbReference type="PROSITE" id="PS50926">
    <property type="entry name" value="TRAM"/>
    <property type="match status" value="1"/>
</dbReference>
<gene>
    <name evidence="1" type="primary">rimO</name>
    <name type="ordered locus">CLB_2270</name>
</gene>
<protein>
    <recommendedName>
        <fullName evidence="1">Ribosomal protein uS12 methylthiotransferase RimO</fullName>
        <shortName evidence="1">uS12 MTTase</shortName>
        <shortName evidence="1">uS12 methylthiotransferase</shortName>
        <ecNumber evidence="1">2.8.4.4</ecNumber>
    </recommendedName>
    <alternativeName>
        <fullName evidence="1">Ribosomal protein uS12 (aspartate-C(3))-methylthiotransferase</fullName>
    </alternativeName>
    <alternativeName>
        <fullName evidence="1">Ribosome maturation factor RimO</fullName>
    </alternativeName>
</protein>
<feature type="chain" id="PRO_0000374777" description="Ribosomal protein uS12 methylthiotransferase RimO">
    <location>
        <begin position="1"/>
        <end position="445"/>
    </location>
</feature>
<feature type="domain" description="MTTase N-terminal" evidence="1">
    <location>
        <begin position="4"/>
        <end position="119"/>
    </location>
</feature>
<feature type="domain" description="Radical SAM core" evidence="2">
    <location>
        <begin position="142"/>
        <end position="372"/>
    </location>
</feature>
<feature type="domain" description="TRAM" evidence="1">
    <location>
        <begin position="375"/>
        <end position="441"/>
    </location>
</feature>
<feature type="binding site" evidence="1">
    <location>
        <position position="13"/>
    </location>
    <ligand>
        <name>[4Fe-4S] cluster</name>
        <dbReference type="ChEBI" id="CHEBI:49883"/>
        <label>1</label>
    </ligand>
</feature>
<feature type="binding site" evidence="1">
    <location>
        <position position="48"/>
    </location>
    <ligand>
        <name>[4Fe-4S] cluster</name>
        <dbReference type="ChEBI" id="CHEBI:49883"/>
        <label>1</label>
    </ligand>
</feature>
<feature type="binding site" evidence="1">
    <location>
        <position position="82"/>
    </location>
    <ligand>
        <name>[4Fe-4S] cluster</name>
        <dbReference type="ChEBI" id="CHEBI:49883"/>
        <label>1</label>
    </ligand>
</feature>
<feature type="binding site" evidence="1">
    <location>
        <position position="156"/>
    </location>
    <ligand>
        <name>[4Fe-4S] cluster</name>
        <dbReference type="ChEBI" id="CHEBI:49883"/>
        <label>2</label>
        <note>4Fe-4S-S-AdoMet</note>
    </ligand>
</feature>
<feature type="binding site" evidence="1">
    <location>
        <position position="160"/>
    </location>
    <ligand>
        <name>[4Fe-4S] cluster</name>
        <dbReference type="ChEBI" id="CHEBI:49883"/>
        <label>2</label>
        <note>4Fe-4S-S-AdoMet</note>
    </ligand>
</feature>
<feature type="binding site" evidence="1">
    <location>
        <position position="163"/>
    </location>
    <ligand>
        <name>[4Fe-4S] cluster</name>
        <dbReference type="ChEBI" id="CHEBI:49883"/>
        <label>2</label>
        <note>4Fe-4S-S-AdoMet</note>
    </ligand>
</feature>
<proteinExistence type="inferred from homology"/>
<accession>A7FVY1</accession>